<comment type="function">
    <text>Regulates secA expression by translational coupling of the secM secA operon. Ribosomes translating the C-terminal region of secM can disrupt an RNA repressor helix that normally blocks secA translation initiation, derepressing the expression of secA. Translational pausing of secM at Pro-166 under secretion-limiting conditions increases the duration of the disruption and thus increases secA expression. This is controlled by interaction of the secM signal peptide with secA and the translocon, possibly by secA pulling the paused secM out of the ribosome. The arrest sequence (150-FXXXXWIXXXXGIRAGP-166) is sufficient to cause arrest of unrelated proteins. Elongation arrest can be alleviated by mutations in the 23S rRNA or in ribosomal protein L22.</text>
</comment>
<comment type="subcellular location">
    <subcellularLocation>
        <location evidence="4">Cytoplasm</location>
        <location evidence="4">Cytosol</location>
    </subcellularLocation>
    <subcellularLocation>
        <location evidence="4">Periplasm</location>
    </subcellularLocation>
    <text>The active form is cytosolic, while the periplasmic form is rapidly degraded, mainly by the tail-specific protease.</text>
</comment>
<comment type="similarity">
    <text evidence="6">Belongs to the SecM family.</text>
</comment>
<comment type="sequence caution" evidence="6">
    <conflict type="erroneous initiation">
        <sequence resource="EMBL-CDS" id="AAA24618"/>
    </conflict>
</comment>
<comment type="sequence caution" evidence="6">
    <conflict type="erroneous initiation">
        <sequence resource="EMBL-CDS" id="AAA83850"/>
    </conflict>
</comment>
<comment type="sequence caution" evidence="6">
    <conflict type="erroneous initiation">
        <sequence resource="EMBL-CDS" id="CAA38874"/>
    </conflict>
</comment>
<gene>
    <name type="primary">secM</name>
    <name type="synonym">srrA</name>
    <name type="synonym">yacA</name>
    <name type="ordered locus">b0097</name>
    <name type="ordered locus">JW5007</name>
</gene>
<evidence type="ECO:0000255" key="1"/>
<evidence type="ECO:0000269" key="2">
    <source>
    </source>
</evidence>
<evidence type="ECO:0000269" key="3">
    <source>
    </source>
</evidence>
<evidence type="ECO:0000269" key="4">
    <source>
    </source>
</evidence>
<evidence type="ECO:0000269" key="5">
    <source>
    </source>
</evidence>
<evidence type="ECO:0000305" key="6"/>
<keyword id="KW-0002">3D-structure</keyword>
<keyword id="KW-0963">Cytoplasm</keyword>
<keyword id="KW-0574">Periplasm</keyword>
<keyword id="KW-1185">Reference proteome</keyword>
<keyword id="KW-0732">Signal</keyword>
<sequence length="170" mass="18880">MSGILTRWRQFGKRYFWPHLLLGMVAASLGLPALSNAAEPNAPAKATTRNHEPSAKVNFGQLALLEANTRRPNSNYSVDYWHQHAIRTVIRHLSFAMAPQTLPVAEESLPLQAQHLALLDTLSALLTQEGTPSEKGYRIDYAHFTPQAKFSTPVWISQAQGIRAGPQRLT</sequence>
<proteinExistence type="evidence at protein level"/>
<reference key="1">
    <citation type="journal article" date="1987" name="J. Bacteriol.">
        <title>Sequence analysis, transcriptional organization, and insertional mutagenesis of the envA gene of Escherichia coli.</title>
        <authorList>
            <person name="Beall B."/>
            <person name="Lutkenhaus J."/>
        </authorList>
    </citation>
    <scope>NUCLEOTIDE SEQUENCE [GENOMIC DNA]</scope>
    <source>
        <strain>K12</strain>
    </source>
</reference>
<reference key="2">
    <citation type="journal article" date="1988" name="J. Bacteriol.">
        <title>Nucleotide sequence of the secA gene and secA(Ts) mutations preventing protein export in Escherichia coli.</title>
        <authorList>
            <person name="Schmidt M."/>
            <person name="Rollo E."/>
            <person name="Grodberg J."/>
            <person name="Oliver D."/>
        </authorList>
    </citation>
    <scope>NUCLEOTIDE SEQUENCE [GENOMIC DNA]</scope>
    <source>
        <strain>K12 / MC4100 / ATCC 35695 / DSM 6574</strain>
    </source>
</reference>
<reference key="3">
    <citation type="journal article" date="1992" name="Nucleic Acids Res.">
        <title>Systematic sequencing of the Escherichia coli genome: analysis of the 0-2.4 min region.</title>
        <authorList>
            <person name="Yura T."/>
            <person name="Mori H."/>
            <person name="Nagai H."/>
            <person name="Nagata T."/>
            <person name="Ishihama A."/>
            <person name="Fujita N."/>
            <person name="Isono K."/>
            <person name="Mizobuchi K."/>
            <person name="Nakata A."/>
        </authorList>
    </citation>
    <scope>NUCLEOTIDE SEQUENCE [LARGE SCALE GENOMIC DNA]</scope>
    <source>
        <strain>K12</strain>
    </source>
</reference>
<reference key="4">
    <citation type="journal article" date="1997" name="Science">
        <title>The complete genome sequence of Escherichia coli K-12.</title>
        <authorList>
            <person name="Blattner F.R."/>
            <person name="Plunkett G. III"/>
            <person name="Bloch C.A."/>
            <person name="Perna N.T."/>
            <person name="Burland V."/>
            <person name="Riley M."/>
            <person name="Collado-Vides J."/>
            <person name="Glasner J.D."/>
            <person name="Rode C.K."/>
            <person name="Mayhew G.F."/>
            <person name="Gregor J."/>
            <person name="Davis N.W."/>
            <person name="Kirkpatrick H.A."/>
            <person name="Goeden M.A."/>
            <person name="Rose D.J."/>
            <person name="Mau B."/>
            <person name="Shao Y."/>
        </authorList>
    </citation>
    <scope>NUCLEOTIDE SEQUENCE [LARGE SCALE GENOMIC DNA]</scope>
    <source>
        <strain>K12 / MG1655 / ATCC 47076</strain>
    </source>
</reference>
<reference key="5">
    <citation type="journal article" date="2006" name="Mol. Syst. Biol.">
        <title>Highly accurate genome sequences of Escherichia coli K-12 strains MG1655 and W3110.</title>
        <authorList>
            <person name="Hayashi K."/>
            <person name="Morooka N."/>
            <person name="Yamamoto Y."/>
            <person name="Fujita K."/>
            <person name="Isono K."/>
            <person name="Choi S."/>
            <person name="Ohtsubo E."/>
            <person name="Baba T."/>
            <person name="Wanner B.L."/>
            <person name="Mori H."/>
            <person name="Horiuchi T."/>
        </authorList>
    </citation>
    <scope>NUCLEOTIDE SEQUENCE [LARGE SCALE GENOMIC DNA]</scope>
    <source>
        <strain>K12 / W3110 / ATCC 27325 / DSM 5911</strain>
    </source>
</reference>
<reference key="6">
    <citation type="journal article" date="1991" name="J. Bacteriol.">
        <title>The first gene in the Escherichia coli secA operon, gene X, encodes a nonessential secretory protein.</title>
        <authorList>
            <person name="Rajapandi T."/>
            <person name="Dolan K.M."/>
            <person name="Oliver D.B."/>
        </authorList>
    </citation>
    <scope>SUBCELLULAR LOCATION</scope>
</reference>
<reference key="7">
    <citation type="journal article" date="1998" name="J. Bacteriol.">
        <title>Regulation of Escherichia coli secA by cellular protein secretion proficiency requires an intact gene X signal sequence and an active translocon.</title>
        <authorList>
            <person name="Oliver D.B."/>
            <person name="Norman J."/>
            <person name="Sarker S."/>
        </authorList>
    </citation>
    <scope>MUTAGENESIS OF 29-LEU--ALA-33 AND 31-LEU--LEU-34</scope>
    <source>
        <strain>CG155</strain>
    </source>
</reference>
<reference key="8">
    <citation type="journal article" date="2000" name="J. Bacteriol.">
        <title>Revised translation start site for secM defines an atypical signal peptide that regulates Escherichia coli secA expression.</title>
        <authorList>
            <person name="Sarker S."/>
            <person name="Rudd K.E."/>
            <person name="Oliver D.B."/>
        </authorList>
    </citation>
    <scope>IDENTIFICATION OF START CODON</scope>
    <scope>MUTAGENESIS</scope>
</reference>
<reference key="9">
    <citation type="journal article" date="2001" name="Mol. Cell">
        <title>Secretion monitor, SecM, undergoes self-translation arrest in the cytosol.</title>
        <authorList>
            <person name="Nakatogawa H."/>
            <person name="Ito K."/>
        </authorList>
    </citation>
    <scope>SELF-TRANSLATION ARREST IN THE CYTOSOL</scope>
    <source>
        <strain>GN40</strain>
    </source>
</reference>
<reference key="10">
    <citation type="journal article" date="2002" name="Cell">
        <title>The ribosomal exit tunnel functions as a discriminating gate.</title>
        <authorList>
            <person name="Nakatogawa H."/>
            <person name="Ito K."/>
        </authorList>
    </citation>
    <scope>MUTAGENESIS OF RESIDUES 140-166</scope>
    <scope>IDENTIFICATION OF THE ARREST-CAUSING SEQUENCE</scope>
    <scope>ALLEVIATION OF ELONGATION ARREST BY RIBOSOMAL PROTEIN L22 MUTATIONS</scope>
</reference>
<reference key="11">
    <citation type="journal article" date="2002" name="J. Bacteriol.">
        <title>Critical regions of secM that control its translation and secretion and promote secretion-specific secA regulation.</title>
        <authorList>
            <person name="Sarker S."/>
            <person name="Oliver D.B."/>
        </authorList>
    </citation>
    <scope>MUTAGENESIS OF MET-24</scope>
    <source>
        <strain>K12 / MC4100 / ATCC 35695 / DSM 6574</strain>
    </source>
</reference>
<reference key="12">
    <citation type="journal article" date="2003" name="J. Bacteriol.">
        <title>Translocon 'pulling' of nascent secM controls the duration of its translational pause and secretion-responsive secA regulation.</title>
        <authorList>
            <person name="Butkus M.E."/>
            <person name="Prundeanu L.B."/>
            <person name="Oliver D.B."/>
        </authorList>
    </citation>
    <scope>POSSIBLE MECHANISM FOR THE RELEASE OF TRANSLATIONAL PAUSING</scope>
</reference>
<reference key="13">
    <citation type="journal article" date="2004" name="Curr. Opin. Microbiol.">
        <title>Control of SecA and SecM translation by protein secretion.</title>
        <authorList>
            <person name="Nakatogawa H."/>
            <person name="Murakami A."/>
            <person name="Ito K."/>
        </authorList>
    </citation>
    <scope>REVIEW</scope>
</reference>
<protein>
    <recommendedName>
        <fullName>Secretion monitor</fullName>
    </recommendedName>
</protein>
<name>SECM_ECOLI</name>
<dbReference type="EMBL" id="M19211">
    <property type="protein sequence ID" value="AAA83850.1"/>
    <property type="status" value="ALT_INIT"/>
    <property type="molecule type" value="Genomic_DNA"/>
</dbReference>
<dbReference type="EMBL" id="M20791">
    <property type="protein sequence ID" value="AAA24618.1"/>
    <property type="status" value="ALT_INIT"/>
    <property type="molecule type" value="Genomic_DNA"/>
</dbReference>
<dbReference type="EMBL" id="X55034">
    <property type="protein sequence ID" value="CAA38874.1"/>
    <property type="status" value="ALT_INIT"/>
    <property type="molecule type" value="Genomic_DNA"/>
</dbReference>
<dbReference type="EMBL" id="U00096">
    <property type="protein sequence ID" value="AAC73208.2"/>
    <property type="molecule type" value="Genomic_DNA"/>
</dbReference>
<dbReference type="EMBL" id="AP009048">
    <property type="protein sequence ID" value="BAB96665.2"/>
    <property type="molecule type" value="Genomic_DNA"/>
</dbReference>
<dbReference type="PIR" id="A64732">
    <property type="entry name" value="QQECAA"/>
</dbReference>
<dbReference type="RefSeq" id="NP_414639.2">
    <property type="nucleotide sequence ID" value="NC_000913.3"/>
</dbReference>
<dbReference type="RefSeq" id="WP_000014321.1">
    <property type="nucleotide sequence ID" value="NZ_STEB01000010.1"/>
</dbReference>
<dbReference type="PDB" id="2N62">
    <property type="method" value="NMR"/>
    <property type="chains" value="L=150-166"/>
</dbReference>
<dbReference type="PDB" id="3JBV">
    <property type="method" value="EM"/>
    <property type="resolution" value="3.32 A"/>
    <property type="chains" value="z=150-166"/>
</dbReference>
<dbReference type="PDB" id="8QOA">
    <property type="method" value="EM"/>
    <property type="resolution" value="2.00 A"/>
    <property type="chains" value="6=132-165"/>
</dbReference>
<dbReference type="PDBsum" id="2N62"/>
<dbReference type="PDBsum" id="3JBV"/>
<dbReference type="PDBsum" id="8QOA"/>
<dbReference type="EMDB" id="EMD-18534"/>
<dbReference type="SMR" id="P62395"/>
<dbReference type="BioGRID" id="4261885">
    <property type="interactions" value="277"/>
</dbReference>
<dbReference type="BioGRID" id="849231">
    <property type="interactions" value="1"/>
</dbReference>
<dbReference type="FunCoup" id="P62395">
    <property type="interactions" value="97"/>
</dbReference>
<dbReference type="IntAct" id="P62395">
    <property type="interactions" value="2"/>
</dbReference>
<dbReference type="STRING" id="511145.b0097"/>
<dbReference type="PaxDb" id="511145-b0097"/>
<dbReference type="EnsemblBacteria" id="AAC73208">
    <property type="protein sequence ID" value="AAC73208"/>
    <property type="gene ID" value="b0097"/>
</dbReference>
<dbReference type="GeneID" id="93777337"/>
<dbReference type="GeneID" id="944831"/>
<dbReference type="KEGG" id="ecj:JW5007"/>
<dbReference type="KEGG" id="eco:b0097"/>
<dbReference type="KEGG" id="ecoc:C3026_00390"/>
<dbReference type="PATRIC" id="fig|511145.12.peg.101"/>
<dbReference type="EchoBASE" id="EB1079"/>
<dbReference type="eggNOG" id="ENOG5031JGK">
    <property type="taxonomic scope" value="Bacteria"/>
</dbReference>
<dbReference type="HOGENOM" id="CLU_108853_0_0_6"/>
<dbReference type="InParanoid" id="P62395"/>
<dbReference type="OMA" id="NYWQQHA"/>
<dbReference type="OrthoDB" id="6495450at2"/>
<dbReference type="PhylomeDB" id="P62395"/>
<dbReference type="BioCyc" id="EcoCyc:EG11087-MONOMER"/>
<dbReference type="EvolutionaryTrace" id="P62395"/>
<dbReference type="PRO" id="PR:P62395"/>
<dbReference type="Proteomes" id="UP000000625">
    <property type="component" value="Chromosome"/>
</dbReference>
<dbReference type="GO" id="GO:0005829">
    <property type="term" value="C:cytosol"/>
    <property type="evidence" value="ECO:0000314"/>
    <property type="project" value="EcoCyc"/>
</dbReference>
<dbReference type="GO" id="GO:0042597">
    <property type="term" value="C:periplasmic space"/>
    <property type="evidence" value="ECO:0007669"/>
    <property type="project" value="UniProtKB-SubCell"/>
</dbReference>
<dbReference type="GO" id="GO:0045182">
    <property type="term" value="F:translation regulator activity"/>
    <property type="evidence" value="ECO:0000314"/>
    <property type="project" value="EcoCyc"/>
</dbReference>
<dbReference type="GO" id="GO:0006417">
    <property type="term" value="P:regulation of translation"/>
    <property type="evidence" value="ECO:0000314"/>
    <property type="project" value="EcoCyc"/>
</dbReference>
<dbReference type="HAMAP" id="MF_01332">
    <property type="entry name" value="SecM"/>
    <property type="match status" value="1"/>
</dbReference>
<dbReference type="InterPro" id="IPR009502">
    <property type="entry name" value="SecM"/>
</dbReference>
<dbReference type="NCBIfam" id="NF002799">
    <property type="entry name" value="PRK02943.1-1"/>
    <property type="match status" value="1"/>
</dbReference>
<dbReference type="Pfam" id="PF06558">
    <property type="entry name" value="SecM"/>
    <property type="match status" value="1"/>
</dbReference>
<dbReference type="PIRSF" id="PIRSF004572">
    <property type="entry name" value="SecM"/>
    <property type="match status" value="1"/>
</dbReference>
<accession>P62395</accession>
<accession>P10409</accession>
<accession>P75641</accession>
<organism>
    <name type="scientific">Escherichia coli (strain K12)</name>
    <dbReference type="NCBI Taxonomy" id="83333"/>
    <lineage>
        <taxon>Bacteria</taxon>
        <taxon>Pseudomonadati</taxon>
        <taxon>Pseudomonadota</taxon>
        <taxon>Gammaproteobacteria</taxon>
        <taxon>Enterobacterales</taxon>
        <taxon>Enterobacteriaceae</taxon>
        <taxon>Escherichia</taxon>
    </lineage>
</organism>
<feature type="signal peptide" evidence="1">
    <location>
        <begin position="1"/>
        <end position="37"/>
    </location>
</feature>
<feature type="chain" id="PRO_0000031988" description="Secretion monitor">
    <location>
        <begin position="38"/>
        <end position="170"/>
    </location>
</feature>
<feature type="mutagenesis site" description="Protein is not produced, (and therefore neither is SecA) indicating this is the start codon." evidence="2">
    <original>M</original>
    <variation>V</variation>
    <location>
        <position position="1"/>
    </location>
</feature>
<feature type="mutagenesis site" description="Protein is produced; this is not the start codon." evidence="3">
    <original>M</original>
    <variation>C</variation>
    <location>
        <position position="24"/>
    </location>
</feature>
<feature type="mutagenesis site" description="Loss of the ability to repress SecA-LacZ fusion proteins, translational pausing is very long, with almost no secretion." evidence="5">
    <location>
        <begin position="29"/>
        <end position="33"/>
    </location>
</feature>
<feature type="mutagenesis site" description="Loss of the ability to repress SecA-LacZ fusion proteins." evidence="5">
    <location>
        <begin position="31"/>
        <end position="34"/>
    </location>
</feature>
<feature type="mutagenesis site" description="Abolishes translation arrest." evidence="2">
    <original>R</original>
    <variation>A</variation>
    <location>
        <position position="163"/>
    </location>
</feature>
<feature type="mutagenesis site" description="Abolishes translation arrest." evidence="2">
    <location>
        <begin position="166"/>
        <end position="170"/>
    </location>
</feature>
<feature type="mutagenesis site" description="Abolishes translation arrest." evidence="2">
    <original>P</original>
    <variation>A</variation>
    <location>
        <position position="166"/>
    </location>
</feature>